<organism>
    <name type="scientific">Thermothelomyces thermophilus</name>
    <name type="common">Myceliophthora thermophila</name>
    <dbReference type="NCBI Taxonomy" id="78579"/>
    <lineage>
        <taxon>Eukaryota</taxon>
        <taxon>Fungi</taxon>
        <taxon>Dikarya</taxon>
        <taxon>Ascomycota</taxon>
        <taxon>Pezizomycotina</taxon>
        <taxon>Sordariomycetes</taxon>
        <taxon>Sordariomycetidae</taxon>
        <taxon>Sordariales</taxon>
        <taxon>Chaetomiaceae</taxon>
        <taxon>Thermothelomyces</taxon>
    </lineage>
</organism>
<name>LP9C_THETO</name>
<dbReference type="EC" id="1.14.99.56" evidence="5"/>
<dbReference type="EMBL" id="KX772411">
    <property type="protein sequence ID" value="AON76801.1"/>
    <property type="molecule type" value="mRNA"/>
</dbReference>
<dbReference type="SMR" id="A0A1C9CXI0"/>
<dbReference type="VEuPathDB" id="FungiDB:MYCTH_100518"/>
<dbReference type="OMA" id="TAIWRYM"/>
<dbReference type="BRENDA" id="1.14.99.56">
    <property type="organism ID" value="13804"/>
</dbReference>
<dbReference type="GO" id="GO:0005576">
    <property type="term" value="C:extracellular region"/>
    <property type="evidence" value="ECO:0007669"/>
    <property type="project" value="UniProtKB-SubCell"/>
</dbReference>
<dbReference type="GO" id="GO:0046872">
    <property type="term" value="F:metal ion binding"/>
    <property type="evidence" value="ECO:0007669"/>
    <property type="project" value="UniProtKB-KW"/>
</dbReference>
<dbReference type="GO" id="GO:0004497">
    <property type="term" value="F:monooxygenase activity"/>
    <property type="evidence" value="ECO:0007669"/>
    <property type="project" value="UniProtKB-KW"/>
</dbReference>
<dbReference type="GO" id="GO:0030245">
    <property type="term" value="P:cellulose catabolic process"/>
    <property type="evidence" value="ECO:0007669"/>
    <property type="project" value="UniProtKB-KW"/>
</dbReference>
<dbReference type="CDD" id="cd21175">
    <property type="entry name" value="LPMO_AA9"/>
    <property type="match status" value="1"/>
</dbReference>
<dbReference type="Gene3D" id="2.70.50.70">
    <property type="match status" value="1"/>
</dbReference>
<dbReference type="InterPro" id="IPR049892">
    <property type="entry name" value="AA9"/>
</dbReference>
<dbReference type="InterPro" id="IPR005103">
    <property type="entry name" value="AA9_LPMO"/>
</dbReference>
<dbReference type="PANTHER" id="PTHR33353:SF18">
    <property type="entry name" value="ENDOGLUCANASE II"/>
    <property type="match status" value="1"/>
</dbReference>
<dbReference type="PANTHER" id="PTHR33353">
    <property type="entry name" value="PUTATIVE (AFU_ORTHOLOGUE AFUA_1G12560)-RELATED"/>
    <property type="match status" value="1"/>
</dbReference>
<dbReference type="Pfam" id="PF03443">
    <property type="entry name" value="AA9"/>
    <property type="match status" value="1"/>
</dbReference>
<feature type="signal peptide" evidence="3">
    <location>
        <begin position="1"/>
        <end position="15"/>
    </location>
</feature>
<feature type="chain" id="PRO_5012949676" description="AA9 family lytic polysaccharide monooxygenase C" evidence="3">
    <location>
        <begin position="16"/>
        <end position="237"/>
    </location>
</feature>
<feature type="binding site" evidence="1">
    <location>
        <position position="16"/>
    </location>
    <ligand>
        <name>Cu(2+)</name>
        <dbReference type="ChEBI" id="CHEBI:29036"/>
        <note>catalytic</note>
    </ligand>
</feature>
<feature type="binding site" evidence="1">
    <location>
        <position position="99"/>
    </location>
    <ligand>
        <name>Cu(2+)</name>
        <dbReference type="ChEBI" id="CHEBI:29036"/>
        <note>catalytic</note>
    </ligand>
</feature>
<feature type="binding site" evidence="1">
    <location>
        <position position="171"/>
    </location>
    <ligand>
        <name>O2</name>
        <dbReference type="ChEBI" id="CHEBI:15379"/>
    </ligand>
</feature>
<feature type="binding site" evidence="1">
    <location>
        <position position="180"/>
    </location>
    <ligand>
        <name>O2</name>
        <dbReference type="ChEBI" id="CHEBI:15379"/>
    </ligand>
</feature>
<feature type="binding site" evidence="1">
    <location>
        <position position="182"/>
    </location>
    <ligand>
        <name>Cu(2+)</name>
        <dbReference type="ChEBI" id="CHEBI:29036"/>
        <note>catalytic</note>
    </ligand>
</feature>
<feature type="glycosylation site" description="N-linked (GlcNAc...) asparagine" evidence="4">
    <location>
        <position position="112"/>
    </location>
</feature>
<feature type="disulfide bond" evidence="2">
    <location>
        <begin position="54"/>
        <end position="185"/>
    </location>
</feature>
<feature type="disulfide bond" evidence="2">
    <location>
        <begin position="155"/>
        <end position="237"/>
    </location>
</feature>
<accession>A0A1C9CXI0</accession>
<protein>
    <recommendedName>
        <fullName evidence="6">AA9 family lytic polysaccharide monooxygenase C</fullName>
        <shortName evidence="6">LPMO9C</shortName>
        <ecNumber evidence="5">1.14.99.56</ecNumber>
    </recommendedName>
    <alternativeName>
        <fullName evidence="7">Cellulase LPMO9C</fullName>
    </alternativeName>
    <alternativeName>
        <fullName evidence="7">Endo-beta-1,4-glucanase LPMO9C</fullName>
        <shortName evidence="7">Endoglucanase LPMO9C</shortName>
    </alternativeName>
    <alternativeName>
        <fullName evidence="7">Glycosyl hydrolase 61 family protein LPMO9C</fullName>
    </alternativeName>
</protein>
<gene>
    <name evidence="6" type="primary">LPMO9C</name>
</gene>
<keyword id="KW-0119">Carbohydrate metabolism</keyword>
<keyword id="KW-0136">Cellulose degradation</keyword>
<keyword id="KW-0186">Copper</keyword>
<keyword id="KW-1015">Disulfide bond</keyword>
<keyword id="KW-0325">Glycoprotein</keyword>
<keyword id="KW-0479">Metal-binding</keyword>
<keyword id="KW-0503">Monooxygenase</keyword>
<keyword id="KW-0560">Oxidoreductase</keyword>
<keyword id="KW-0624">Polysaccharide degradation</keyword>
<keyword id="KW-0964">Secreted</keyword>
<keyword id="KW-0732">Signal</keyword>
<comment type="function">
    <text evidence="5">Lytic polysaccharide monooxygenase (LPMO) that depolymerizes crystalline and amorphous polysaccharides via the oxidation of scissile alpha- or beta-(1-4)-glycosidic bonds, yielding C4 oxidation products (PubMed:27588039). Catalysis by LPMOs requires the reduction of the active-site copper from Cu(II) to Cu(I) by a reducing agent and H(2)O(2) or O(2) as a cosubstrate (PubMed:27588039). Shows oxidative cleavage of beta-(1-3, 1-4)-glucan from oat spelt or xyloglucan from tamarind seed, in addition to cellulose (PubMed:27588039).</text>
</comment>
<comment type="catalytic activity">
    <reaction evidence="5">
        <text>[(1-&gt;4)-beta-D-glucosyl]n+m + reduced acceptor + O2 = 4-dehydro-beta-D-glucosyl-[(1-&gt;4)-beta-D-glucosyl]n-1 + [(1-&gt;4)-beta-D-glucosyl]m + acceptor + H2O.</text>
        <dbReference type="EC" id="1.14.99.56"/>
    </reaction>
</comment>
<comment type="cofactor">
    <cofactor evidence="8">
        <name>Cu(2+)</name>
        <dbReference type="ChEBI" id="CHEBI:29036"/>
    </cofactor>
    <text evidence="8">Binds 1 copper ion per subunit.</text>
</comment>
<comment type="activity regulation">
    <text evidence="5">Is able to utilize various natural phenolic compounds as reducing agents. Most of these reducing agents are present in plants, either free or as lignin building blocks, such as sinapic acid, or as flavonoids such as catechin and dopamine (PubMed:27588039). Phenolic compounds with 1,2-benzenediol and 1,2,3-benzenetriol moieties yield the highest release of oxidized and non-oxidized glucooligosaccharides from cellulose compared to monophenols or sulfur-containing compounds (PubMed:27588039).</text>
</comment>
<comment type="subcellular location">
    <subcellularLocation>
        <location evidence="8">Secreted</location>
    </subcellularLocation>
</comment>
<comment type="biotechnology">
    <text evidence="5">Lignocellulose is the most abundant polymeric composite on Earth and is a recalcitrant but promising renewable substrate for industrial biotechnology applications. Together with cellobiose dehydrogenases (CDHs) an enzymatic system capable of oxidative cellulose cleavage is formed, which increases the efficiency of cellulases and put LPMOs at focus of biofuel research.</text>
</comment>
<comment type="similarity">
    <text evidence="7">Belongs to the polysaccharide monooxygenase AA9 family.</text>
</comment>
<evidence type="ECO:0000250" key="1">
    <source>
        <dbReference type="UniProtKB" id="Q1K8B6"/>
    </source>
</evidence>
<evidence type="ECO:0000250" key="2">
    <source>
        <dbReference type="UniProtKB" id="Q4WP32"/>
    </source>
</evidence>
<evidence type="ECO:0000255" key="3"/>
<evidence type="ECO:0000255" key="4">
    <source>
        <dbReference type="PROSITE-ProRule" id="PRU00498"/>
    </source>
</evidence>
<evidence type="ECO:0000269" key="5">
    <source>
    </source>
</evidence>
<evidence type="ECO:0000303" key="6">
    <source>
    </source>
</evidence>
<evidence type="ECO:0000305" key="7"/>
<evidence type="ECO:0000305" key="8">
    <source>
    </source>
</evidence>
<reference key="1">
    <citation type="journal article" date="2016" name="Biotechnol. Biofuels">
        <title>Lytic polysaccharide monooxygenases from Myceliophthora thermophila C1 differ in substrate preference and reducing agent specificity.</title>
        <authorList>
            <person name="Frommhagen M."/>
            <person name="Koetsier M.J."/>
            <person name="Westphal A.H."/>
            <person name="Visser J."/>
            <person name="Hinz S.W."/>
            <person name="Vincken J.P."/>
            <person name="van Berkel W.J."/>
            <person name="Kabel M.A."/>
            <person name="Gruppen H."/>
        </authorList>
    </citation>
    <scope>NUCLEOTIDE SEQUENCE [MRNA]</scope>
    <scope>FUNCTION</scope>
    <scope>CATALYTIC ACTIVITY</scope>
    <scope>ACTIVITY REGULATION</scope>
    <scope>BIOTECHNOLOGY</scope>
    <source>
        <strain>C1</strain>
    </source>
</reference>
<sequence length="237" mass="24857">MKVLAPLILAGAASAHTIFSSLEVGGVNQGIGQGVRVPSYNGPIEDVTSNSIACNGPPNPTTPTNKVITVRAGETVTAVWRYMLSTTGSAPNDIMDSSHKGPTMAYLKKVDNATTDSGVGGGWFKIQEDGLTNGVWGTERVINGQGRHNIKIPECIAPGQYLLRAEMLALHGASNYPGAQFYMECAQLNIVGGTGSKTPSTVSFPGAYKGTDPGVKINIYWPPVTSYQIPGPGVFTC</sequence>
<proteinExistence type="evidence at protein level"/>